<gene>
    <name evidence="1" type="primary">dinB</name>
    <name type="ordered locus">YPDSF_2858</name>
</gene>
<organism>
    <name type="scientific">Yersinia pestis (strain Pestoides F)</name>
    <dbReference type="NCBI Taxonomy" id="386656"/>
    <lineage>
        <taxon>Bacteria</taxon>
        <taxon>Pseudomonadati</taxon>
        <taxon>Pseudomonadota</taxon>
        <taxon>Gammaproteobacteria</taxon>
        <taxon>Enterobacterales</taxon>
        <taxon>Yersiniaceae</taxon>
        <taxon>Yersinia</taxon>
    </lineage>
</organism>
<reference key="1">
    <citation type="submission" date="2007-02" db="EMBL/GenBank/DDBJ databases">
        <title>Complete sequence of chromosome of Yersinia pestis Pestoides F.</title>
        <authorList>
            <consortium name="US DOE Joint Genome Institute"/>
            <person name="Copeland A."/>
            <person name="Lucas S."/>
            <person name="Lapidus A."/>
            <person name="Barry K."/>
            <person name="Detter J.C."/>
            <person name="Glavina del Rio T."/>
            <person name="Hammon N."/>
            <person name="Israni S."/>
            <person name="Dalin E."/>
            <person name="Tice H."/>
            <person name="Pitluck S."/>
            <person name="Di Bartolo G."/>
            <person name="Chain P."/>
            <person name="Malfatti S."/>
            <person name="Shin M."/>
            <person name="Vergez L."/>
            <person name="Schmutz J."/>
            <person name="Larimer F."/>
            <person name="Land M."/>
            <person name="Hauser L."/>
            <person name="Worsham P."/>
            <person name="Chu M."/>
            <person name="Bearden S."/>
            <person name="Garcia E."/>
            <person name="Richardson P."/>
        </authorList>
    </citation>
    <scope>NUCLEOTIDE SEQUENCE [LARGE SCALE GENOMIC DNA]</scope>
    <source>
        <strain>Pestoides F</strain>
    </source>
</reference>
<accession>A4TPK8</accession>
<feature type="chain" id="PRO_1000084975" description="DNA polymerase IV">
    <location>
        <begin position="1"/>
        <end position="352"/>
    </location>
</feature>
<feature type="domain" description="UmuC" evidence="1">
    <location>
        <begin position="4"/>
        <end position="185"/>
    </location>
</feature>
<feature type="active site" evidence="1">
    <location>
        <position position="104"/>
    </location>
</feature>
<feature type="binding site" evidence="1">
    <location>
        <position position="8"/>
    </location>
    <ligand>
        <name>Mg(2+)</name>
        <dbReference type="ChEBI" id="CHEBI:18420"/>
    </ligand>
</feature>
<feature type="binding site" evidence="1">
    <location>
        <position position="103"/>
    </location>
    <ligand>
        <name>Mg(2+)</name>
        <dbReference type="ChEBI" id="CHEBI:18420"/>
    </ligand>
</feature>
<feature type="site" description="Substrate discrimination" evidence="1">
    <location>
        <position position="13"/>
    </location>
</feature>
<keyword id="KW-0963">Cytoplasm</keyword>
<keyword id="KW-0227">DNA damage</keyword>
<keyword id="KW-0234">DNA repair</keyword>
<keyword id="KW-0235">DNA replication</keyword>
<keyword id="KW-0238">DNA-binding</keyword>
<keyword id="KW-0239">DNA-directed DNA polymerase</keyword>
<keyword id="KW-0460">Magnesium</keyword>
<keyword id="KW-0479">Metal-binding</keyword>
<keyword id="KW-0515">Mutator protein</keyword>
<keyword id="KW-0548">Nucleotidyltransferase</keyword>
<keyword id="KW-0808">Transferase</keyword>
<comment type="function">
    <text evidence="1">Poorly processive, error-prone DNA polymerase involved in untargeted mutagenesis. Copies undamaged DNA at stalled replication forks, which arise in vivo from mismatched or misaligned primer ends. These misaligned primers can be extended by PolIV. Exhibits no 3'-5' exonuclease (proofreading) activity. May be involved in translesional synthesis, in conjunction with the beta clamp from PolIII.</text>
</comment>
<comment type="catalytic activity">
    <reaction evidence="1">
        <text>DNA(n) + a 2'-deoxyribonucleoside 5'-triphosphate = DNA(n+1) + diphosphate</text>
        <dbReference type="Rhea" id="RHEA:22508"/>
        <dbReference type="Rhea" id="RHEA-COMP:17339"/>
        <dbReference type="Rhea" id="RHEA-COMP:17340"/>
        <dbReference type="ChEBI" id="CHEBI:33019"/>
        <dbReference type="ChEBI" id="CHEBI:61560"/>
        <dbReference type="ChEBI" id="CHEBI:173112"/>
        <dbReference type="EC" id="2.7.7.7"/>
    </reaction>
</comment>
<comment type="cofactor">
    <cofactor evidence="1">
        <name>Mg(2+)</name>
        <dbReference type="ChEBI" id="CHEBI:18420"/>
    </cofactor>
    <text evidence="1">Binds 2 magnesium ions per subunit.</text>
</comment>
<comment type="subunit">
    <text evidence="1">Monomer.</text>
</comment>
<comment type="subcellular location">
    <subcellularLocation>
        <location evidence="1">Cytoplasm</location>
    </subcellularLocation>
</comment>
<comment type="similarity">
    <text evidence="1">Belongs to the DNA polymerase type-Y family.</text>
</comment>
<proteinExistence type="inferred from homology"/>
<protein>
    <recommendedName>
        <fullName evidence="1">DNA polymerase IV</fullName>
        <shortName evidence="1">Pol IV</shortName>
        <ecNumber evidence="1">2.7.7.7</ecNumber>
    </recommendedName>
</protein>
<sequence length="352" mass="39657">MRKIIHVDMDCFFAAVEMRDDPRLRDIPLAIGGSKERRGVISTANYPARRYGVRSAMPTAMAFKLCPQLTLLPGRMAAYKEASQHIREIFARYTPLIEPLSLDEAYLDVSDSLACGGSATLIAQEIRQSIASELNLTASAGIAPIKFLAKIASELNKPNGQYVITPNQIQPFLQDLPLSKIPGVGAVTAKRLQALGLVTCGDIQKYPLAELLKHFGKFGRVLWERSHGIDEREISPDRLRKSVGVEKTLAEDIYDWESCEALIEELYLELETRLRKVKPSLHIARQGVKLKFHDFQQTTQEHTWPVLNKVDLLEIAHAAWHERRAERGVRLVGLHVTLLDPQLERQLLLDWG</sequence>
<evidence type="ECO:0000255" key="1">
    <source>
        <dbReference type="HAMAP-Rule" id="MF_01113"/>
    </source>
</evidence>
<name>DPO4_YERPP</name>
<dbReference type="EC" id="2.7.7.7" evidence="1"/>
<dbReference type="EMBL" id="CP000668">
    <property type="protein sequence ID" value="ABP41220.1"/>
    <property type="molecule type" value="Genomic_DNA"/>
</dbReference>
<dbReference type="RefSeq" id="WP_002208708.1">
    <property type="nucleotide sequence ID" value="NZ_CP009715.1"/>
</dbReference>
<dbReference type="SMR" id="A4TPK8"/>
<dbReference type="GeneID" id="57975488"/>
<dbReference type="KEGG" id="ypp:YPDSF_2858"/>
<dbReference type="PATRIC" id="fig|386656.14.peg.122"/>
<dbReference type="GO" id="GO:0005829">
    <property type="term" value="C:cytosol"/>
    <property type="evidence" value="ECO:0007669"/>
    <property type="project" value="TreeGrafter"/>
</dbReference>
<dbReference type="GO" id="GO:0003684">
    <property type="term" value="F:damaged DNA binding"/>
    <property type="evidence" value="ECO:0007669"/>
    <property type="project" value="InterPro"/>
</dbReference>
<dbReference type="GO" id="GO:0003887">
    <property type="term" value="F:DNA-directed DNA polymerase activity"/>
    <property type="evidence" value="ECO:0007669"/>
    <property type="project" value="UniProtKB-UniRule"/>
</dbReference>
<dbReference type="GO" id="GO:0000287">
    <property type="term" value="F:magnesium ion binding"/>
    <property type="evidence" value="ECO:0007669"/>
    <property type="project" value="UniProtKB-UniRule"/>
</dbReference>
<dbReference type="GO" id="GO:0006261">
    <property type="term" value="P:DNA-templated DNA replication"/>
    <property type="evidence" value="ECO:0007669"/>
    <property type="project" value="UniProtKB-UniRule"/>
</dbReference>
<dbReference type="GO" id="GO:0042276">
    <property type="term" value="P:error-prone translesion synthesis"/>
    <property type="evidence" value="ECO:0007669"/>
    <property type="project" value="TreeGrafter"/>
</dbReference>
<dbReference type="GO" id="GO:0009432">
    <property type="term" value="P:SOS response"/>
    <property type="evidence" value="ECO:0007669"/>
    <property type="project" value="TreeGrafter"/>
</dbReference>
<dbReference type="CDD" id="cd03586">
    <property type="entry name" value="PolY_Pol_IV_kappa"/>
    <property type="match status" value="1"/>
</dbReference>
<dbReference type="FunFam" id="1.10.150.20:FF:000019">
    <property type="entry name" value="DNA polymerase IV"/>
    <property type="match status" value="1"/>
</dbReference>
<dbReference type="FunFam" id="3.30.1490.100:FF:000002">
    <property type="entry name" value="DNA polymerase IV"/>
    <property type="match status" value="1"/>
</dbReference>
<dbReference type="FunFam" id="3.30.70.270:FF:000002">
    <property type="entry name" value="DNA polymerase IV"/>
    <property type="match status" value="1"/>
</dbReference>
<dbReference type="FunFam" id="3.40.1170.60:FF:000001">
    <property type="entry name" value="DNA polymerase IV"/>
    <property type="match status" value="1"/>
</dbReference>
<dbReference type="Gene3D" id="3.30.70.270">
    <property type="match status" value="1"/>
</dbReference>
<dbReference type="Gene3D" id="3.40.1170.60">
    <property type="match status" value="1"/>
</dbReference>
<dbReference type="Gene3D" id="1.10.150.20">
    <property type="entry name" value="5' to 3' exonuclease, C-terminal subdomain"/>
    <property type="match status" value="1"/>
</dbReference>
<dbReference type="Gene3D" id="3.30.1490.100">
    <property type="entry name" value="DNA polymerase, Y-family, little finger domain"/>
    <property type="match status" value="1"/>
</dbReference>
<dbReference type="HAMAP" id="MF_01113">
    <property type="entry name" value="DNApol_IV"/>
    <property type="match status" value="1"/>
</dbReference>
<dbReference type="InterPro" id="IPR043502">
    <property type="entry name" value="DNA/RNA_pol_sf"/>
</dbReference>
<dbReference type="InterPro" id="IPR036775">
    <property type="entry name" value="DNA_pol_Y-fam_lit_finger_sf"/>
</dbReference>
<dbReference type="InterPro" id="IPR017961">
    <property type="entry name" value="DNA_pol_Y-fam_little_finger"/>
</dbReference>
<dbReference type="InterPro" id="IPR050116">
    <property type="entry name" value="DNA_polymerase-Y"/>
</dbReference>
<dbReference type="InterPro" id="IPR022880">
    <property type="entry name" value="DNApol_IV"/>
</dbReference>
<dbReference type="InterPro" id="IPR053848">
    <property type="entry name" value="IMS_HHH_1"/>
</dbReference>
<dbReference type="InterPro" id="IPR043128">
    <property type="entry name" value="Rev_trsase/Diguanyl_cyclase"/>
</dbReference>
<dbReference type="InterPro" id="IPR001126">
    <property type="entry name" value="UmuC"/>
</dbReference>
<dbReference type="NCBIfam" id="NF002677">
    <property type="entry name" value="PRK02406.1"/>
    <property type="match status" value="1"/>
</dbReference>
<dbReference type="PANTHER" id="PTHR11076:SF33">
    <property type="entry name" value="DNA POLYMERASE KAPPA"/>
    <property type="match status" value="1"/>
</dbReference>
<dbReference type="PANTHER" id="PTHR11076">
    <property type="entry name" value="DNA REPAIR POLYMERASE UMUC / TRANSFERASE FAMILY MEMBER"/>
    <property type="match status" value="1"/>
</dbReference>
<dbReference type="Pfam" id="PF00817">
    <property type="entry name" value="IMS"/>
    <property type="match status" value="1"/>
</dbReference>
<dbReference type="Pfam" id="PF11799">
    <property type="entry name" value="IMS_C"/>
    <property type="match status" value="1"/>
</dbReference>
<dbReference type="Pfam" id="PF21999">
    <property type="entry name" value="IMS_HHH_1"/>
    <property type="match status" value="1"/>
</dbReference>
<dbReference type="SUPFAM" id="SSF56672">
    <property type="entry name" value="DNA/RNA polymerases"/>
    <property type="match status" value="1"/>
</dbReference>
<dbReference type="SUPFAM" id="SSF100879">
    <property type="entry name" value="Lesion bypass DNA polymerase (Y-family), little finger domain"/>
    <property type="match status" value="1"/>
</dbReference>
<dbReference type="PROSITE" id="PS50173">
    <property type="entry name" value="UMUC"/>
    <property type="match status" value="1"/>
</dbReference>